<reference key="1">
    <citation type="journal article" date="2012" name="Stand. Genomic Sci.">
        <title>Complete genome sequence of Polynucleobacter necessarius subsp. asymbioticus type strain (QLW-P1DMWA-1(T)).</title>
        <authorList>
            <person name="Meincke L."/>
            <person name="Copeland A."/>
            <person name="Lapidus A."/>
            <person name="Lucas S."/>
            <person name="Berry K.W."/>
            <person name="Del Rio T.G."/>
            <person name="Hammon N."/>
            <person name="Dalin E."/>
            <person name="Tice H."/>
            <person name="Pitluck S."/>
            <person name="Richardson P."/>
            <person name="Bruce D."/>
            <person name="Goodwin L."/>
            <person name="Han C."/>
            <person name="Tapia R."/>
            <person name="Detter J.C."/>
            <person name="Schmutz J."/>
            <person name="Brettin T."/>
            <person name="Larimer F."/>
            <person name="Land M."/>
            <person name="Hauser L."/>
            <person name="Kyrpides N.C."/>
            <person name="Ivanova N."/>
            <person name="Goker M."/>
            <person name="Woyke T."/>
            <person name="Wu Q.L."/>
            <person name="Pockl M."/>
            <person name="Hahn M.W."/>
            <person name="Klenk H.P."/>
        </authorList>
    </citation>
    <scope>NUCLEOTIDE SEQUENCE [LARGE SCALE GENOMIC DNA]</scope>
    <source>
        <strain>DSM 18221 / CIP 109841 / QLW-P1DMWA-1</strain>
    </source>
</reference>
<name>YIDC_POLAQ</name>
<sequence>MDFKKTILWAVFSLSGLMLYNNWQVHEGKPSMFGGAPATTASAPNKSGAPAKLDTPVAISGIPSVTQTPTANSAPVESTQKFVLENELLSVEISAAGANVVDAKLLKELTADQKPVEIFQHTPTHTYVARSGLVAVGNTDLPNHTSLFKLDRSGKDGSGRPFLVLSSERNGVKLEKTFLLNPGSYDIYVGHRVTQVTPNGAPLILYTEIVRDGSEEKKIGPFGGAFSASTFTGPAIYTDGGKYKKVSFADIEKNKFTAPSQIAAGQPGWVAMVQHYFASAWIPDDKLPRDIYSGKIDNDLYRVGMQTQLGTIATGTTVMANAQLFVGPQEERMLETIAPGLELLKDYGYLTILAKPIFWLLEHIHNIVGNWGWSIILLTVLIKLAFFPLSAASYKSMARMKEVQPRLAAMKEQYKGEPQKLNQAMMEMYRKEKINPLGGCLPVVIQIPVFISLYWVLLSSVEMRGAPWILWIHDLSVPDPYYILPVVMAVSMFVQTKLNPTPPDPVQAKVMMYMPIVFSIMFFFFPAGLVLYWVTNNLLSIAQQWQINRLFGKKPAK</sequence>
<evidence type="ECO:0000255" key="1">
    <source>
        <dbReference type="HAMAP-Rule" id="MF_01810"/>
    </source>
</evidence>
<feature type="chain" id="PRO_1000088257" description="Membrane protein insertase YidC">
    <location>
        <begin position="1"/>
        <end position="557"/>
    </location>
</feature>
<feature type="transmembrane region" description="Helical" evidence="1">
    <location>
        <begin position="6"/>
        <end position="26"/>
    </location>
</feature>
<feature type="transmembrane region" description="Helical" evidence="1">
    <location>
        <begin position="219"/>
        <end position="239"/>
    </location>
</feature>
<feature type="transmembrane region" description="Helical" evidence="1">
    <location>
        <begin position="367"/>
        <end position="387"/>
    </location>
</feature>
<feature type="transmembrane region" description="Helical" evidence="1">
    <location>
        <begin position="437"/>
        <end position="457"/>
    </location>
</feature>
<feature type="transmembrane region" description="Helical" evidence="1">
    <location>
        <begin position="514"/>
        <end position="534"/>
    </location>
</feature>
<comment type="function">
    <text evidence="1">Required for the insertion and/or proper folding and/or complex formation of integral membrane proteins into the membrane. Involved in integration of membrane proteins that insert both dependently and independently of the Sec translocase complex, as well as at least some lipoproteins. Aids folding of multispanning membrane proteins.</text>
</comment>
<comment type="subunit">
    <text evidence="1">Interacts with the Sec translocase complex via SecD. Specifically interacts with transmembrane segments of nascent integral membrane proteins during membrane integration.</text>
</comment>
<comment type="subcellular location">
    <subcellularLocation>
        <location evidence="1">Cell inner membrane</location>
        <topology evidence="1">Multi-pass membrane protein</topology>
    </subcellularLocation>
</comment>
<comment type="similarity">
    <text evidence="1">Belongs to the OXA1/ALB3/YidC family. Type 1 subfamily.</text>
</comment>
<protein>
    <recommendedName>
        <fullName evidence="1">Membrane protein insertase YidC</fullName>
    </recommendedName>
    <alternativeName>
        <fullName evidence="1">Foldase YidC</fullName>
    </alternativeName>
    <alternativeName>
        <fullName evidence="1">Membrane integrase YidC</fullName>
    </alternativeName>
    <alternativeName>
        <fullName evidence="1">Membrane protein YidC</fullName>
    </alternativeName>
</protein>
<proteinExistence type="inferred from homology"/>
<dbReference type="EMBL" id="CP000655">
    <property type="protein sequence ID" value="ABP35296.1"/>
    <property type="molecule type" value="Genomic_DNA"/>
</dbReference>
<dbReference type="RefSeq" id="WP_011903919.1">
    <property type="nucleotide sequence ID" value="NC_009379.1"/>
</dbReference>
<dbReference type="SMR" id="A4T0N2"/>
<dbReference type="GeneID" id="31482479"/>
<dbReference type="KEGG" id="pnu:Pnuc_2085"/>
<dbReference type="eggNOG" id="COG0706">
    <property type="taxonomic scope" value="Bacteria"/>
</dbReference>
<dbReference type="eggNOG" id="COG4455">
    <property type="taxonomic scope" value="Bacteria"/>
</dbReference>
<dbReference type="HOGENOM" id="CLU_016535_3_0_4"/>
<dbReference type="Proteomes" id="UP000000231">
    <property type="component" value="Chromosome"/>
</dbReference>
<dbReference type="GO" id="GO:0005886">
    <property type="term" value="C:plasma membrane"/>
    <property type="evidence" value="ECO:0007669"/>
    <property type="project" value="UniProtKB-SubCell"/>
</dbReference>
<dbReference type="GO" id="GO:0032977">
    <property type="term" value="F:membrane insertase activity"/>
    <property type="evidence" value="ECO:0007669"/>
    <property type="project" value="InterPro"/>
</dbReference>
<dbReference type="GO" id="GO:0051205">
    <property type="term" value="P:protein insertion into membrane"/>
    <property type="evidence" value="ECO:0007669"/>
    <property type="project" value="TreeGrafter"/>
</dbReference>
<dbReference type="GO" id="GO:0015031">
    <property type="term" value="P:protein transport"/>
    <property type="evidence" value="ECO:0007669"/>
    <property type="project" value="UniProtKB-KW"/>
</dbReference>
<dbReference type="CDD" id="cd20070">
    <property type="entry name" value="5TM_YidC_Alb3"/>
    <property type="match status" value="1"/>
</dbReference>
<dbReference type="CDD" id="cd19961">
    <property type="entry name" value="EcYidC-like_peri"/>
    <property type="match status" value="1"/>
</dbReference>
<dbReference type="Gene3D" id="2.70.98.90">
    <property type="match status" value="1"/>
</dbReference>
<dbReference type="HAMAP" id="MF_01810">
    <property type="entry name" value="YidC_type1"/>
    <property type="match status" value="1"/>
</dbReference>
<dbReference type="InterPro" id="IPR019998">
    <property type="entry name" value="Membr_insert_YidC"/>
</dbReference>
<dbReference type="InterPro" id="IPR028053">
    <property type="entry name" value="Membr_insert_YidC_N"/>
</dbReference>
<dbReference type="InterPro" id="IPR001708">
    <property type="entry name" value="YidC/ALB3/OXA1/COX18"/>
</dbReference>
<dbReference type="InterPro" id="IPR028055">
    <property type="entry name" value="YidC/Oxa/ALB_C"/>
</dbReference>
<dbReference type="InterPro" id="IPR047196">
    <property type="entry name" value="YidC_ALB_C"/>
</dbReference>
<dbReference type="InterPro" id="IPR038221">
    <property type="entry name" value="YidC_periplasmic_sf"/>
</dbReference>
<dbReference type="NCBIfam" id="NF002352">
    <property type="entry name" value="PRK01318.1-3"/>
    <property type="match status" value="1"/>
</dbReference>
<dbReference type="NCBIfam" id="NF002353">
    <property type="entry name" value="PRK01318.1-4"/>
    <property type="match status" value="1"/>
</dbReference>
<dbReference type="NCBIfam" id="TIGR03593">
    <property type="entry name" value="yidC_nterm"/>
    <property type="match status" value="1"/>
</dbReference>
<dbReference type="NCBIfam" id="TIGR03592">
    <property type="entry name" value="yidC_oxa1_cterm"/>
    <property type="match status" value="1"/>
</dbReference>
<dbReference type="PANTHER" id="PTHR12428:SF65">
    <property type="entry name" value="CYTOCHROME C OXIDASE ASSEMBLY PROTEIN COX18, MITOCHONDRIAL"/>
    <property type="match status" value="1"/>
</dbReference>
<dbReference type="PANTHER" id="PTHR12428">
    <property type="entry name" value="OXA1"/>
    <property type="match status" value="1"/>
</dbReference>
<dbReference type="Pfam" id="PF02096">
    <property type="entry name" value="60KD_IMP"/>
    <property type="match status" value="1"/>
</dbReference>
<dbReference type="Pfam" id="PF14849">
    <property type="entry name" value="YidC_periplas"/>
    <property type="match status" value="1"/>
</dbReference>
<dbReference type="PRINTS" id="PR00701">
    <property type="entry name" value="60KDINNERMP"/>
</dbReference>
<dbReference type="PRINTS" id="PR01900">
    <property type="entry name" value="YIDCPROTEIN"/>
</dbReference>
<accession>A4T0N2</accession>
<gene>
    <name evidence="1" type="primary">yidC</name>
    <name type="ordered locus">Pnuc_2085</name>
</gene>
<organism>
    <name type="scientific">Polynucleobacter asymbioticus (strain DSM 18221 / CIP 109841 / QLW-P1DMWA-1)</name>
    <name type="common">Polynucleobacter necessarius subsp. asymbioticus</name>
    <dbReference type="NCBI Taxonomy" id="312153"/>
    <lineage>
        <taxon>Bacteria</taxon>
        <taxon>Pseudomonadati</taxon>
        <taxon>Pseudomonadota</taxon>
        <taxon>Betaproteobacteria</taxon>
        <taxon>Burkholderiales</taxon>
        <taxon>Burkholderiaceae</taxon>
        <taxon>Polynucleobacter</taxon>
    </lineage>
</organism>
<keyword id="KW-0997">Cell inner membrane</keyword>
<keyword id="KW-1003">Cell membrane</keyword>
<keyword id="KW-0143">Chaperone</keyword>
<keyword id="KW-0472">Membrane</keyword>
<keyword id="KW-0653">Protein transport</keyword>
<keyword id="KW-1185">Reference proteome</keyword>
<keyword id="KW-0812">Transmembrane</keyword>
<keyword id="KW-1133">Transmembrane helix</keyword>
<keyword id="KW-0813">Transport</keyword>